<organism>
    <name type="scientific">Saccharomyces cerevisiae (strain ATCC 204508 / S288c)</name>
    <name type="common">Baker's yeast</name>
    <dbReference type="NCBI Taxonomy" id="559292"/>
    <lineage>
        <taxon>Eukaryota</taxon>
        <taxon>Fungi</taxon>
        <taxon>Dikarya</taxon>
        <taxon>Ascomycota</taxon>
        <taxon>Saccharomycotina</taxon>
        <taxon>Saccharomycetes</taxon>
        <taxon>Saccharomycetales</taxon>
        <taxon>Saccharomycetaceae</taxon>
        <taxon>Saccharomyces</taxon>
    </lineage>
</organism>
<reference key="1">
    <citation type="journal article" date="1987" name="Eur. J. Biochem.">
        <title>Nucleotide sequence of the ARG3 gene of the yeast Saccharomyces cerevisiae encoding ornithine carbamoyltransferase. Comparison with other carbamoyltransferases.</title>
        <authorList>
            <person name="Huygen R."/>
            <person name="Crabeel M."/>
            <person name="Glansdorff N."/>
        </authorList>
    </citation>
    <scope>NUCLEOTIDE SEQUENCE [GENOMIC DNA]</scope>
</reference>
<reference key="2">
    <citation type="journal article" date="1995" name="Yeast">
        <title>Sequence analysis of a 33.1 kb fragment from the left arm of Saccharomyces cerevisiae chromosome X, including putative proteins with leucine zippers, a fungal Zn(II)2-Cys6 binuclear cluster domain and a putative alpha 2-SCB-alpha 2 binding site.</title>
        <authorList>
            <person name="Miosga T."/>
            <person name="Schaaff-Gerstenschlaeger I."/>
            <person name="Chalwatzis N."/>
            <person name="Baur A."/>
            <person name="Boles E."/>
            <person name="Fournier C."/>
            <person name="Schmitt S."/>
            <person name="Velten C."/>
            <person name="Wilhelm N."/>
            <person name="Zimmermann F.K."/>
        </authorList>
    </citation>
    <scope>NUCLEOTIDE SEQUENCE [GENOMIC DNA]</scope>
    <source>
        <strain>ATCC 204508 / S288c</strain>
    </source>
</reference>
<reference key="3">
    <citation type="journal article" date="1996" name="EMBO J.">
        <title>Complete nucleotide sequence of Saccharomyces cerevisiae chromosome X.</title>
        <authorList>
            <person name="Galibert F."/>
            <person name="Alexandraki D."/>
            <person name="Baur A."/>
            <person name="Boles E."/>
            <person name="Chalwatzis N."/>
            <person name="Chuat J.-C."/>
            <person name="Coster F."/>
            <person name="Cziepluch C."/>
            <person name="de Haan M."/>
            <person name="Domdey H."/>
            <person name="Durand P."/>
            <person name="Entian K.-D."/>
            <person name="Gatius M."/>
            <person name="Goffeau A."/>
            <person name="Grivell L.A."/>
            <person name="Hennemann A."/>
            <person name="Herbert C.J."/>
            <person name="Heumann K."/>
            <person name="Hilger F."/>
            <person name="Hollenberg C.P."/>
            <person name="Huang M.-E."/>
            <person name="Jacq C."/>
            <person name="Jauniaux J.-C."/>
            <person name="Katsoulou C."/>
            <person name="Kirchrath L."/>
            <person name="Kleine K."/>
            <person name="Kordes E."/>
            <person name="Koetter P."/>
            <person name="Liebl S."/>
            <person name="Louis E.J."/>
            <person name="Manus V."/>
            <person name="Mewes H.-W."/>
            <person name="Miosga T."/>
            <person name="Obermaier B."/>
            <person name="Perea J."/>
            <person name="Pohl T.M."/>
            <person name="Portetelle D."/>
            <person name="Pujol A."/>
            <person name="Purnelle B."/>
            <person name="Ramezani Rad M."/>
            <person name="Rasmussen S.W."/>
            <person name="Rose M."/>
            <person name="Rossau R."/>
            <person name="Schaaff-Gerstenschlaeger I."/>
            <person name="Smits P.H.M."/>
            <person name="Scarcez T."/>
            <person name="Soriano N."/>
            <person name="To Van D."/>
            <person name="Tzermia M."/>
            <person name="Van Broekhoven A."/>
            <person name="Vandenbol M."/>
            <person name="Wedler H."/>
            <person name="von Wettstein D."/>
            <person name="Wambutt R."/>
            <person name="Zagulski M."/>
            <person name="Zollner A."/>
            <person name="Karpfinger-Hartl L."/>
        </authorList>
    </citation>
    <scope>NUCLEOTIDE SEQUENCE [LARGE SCALE GENOMIC DNA]</scope>
    <source>
        <strain>ATCC 204508 / S288c</strain>
    </source>
</reference>
<reference key="4">
    <citation type="journal article" date="2014" name="G3 (Bethesda)">
        <title>The reference genome sequence of Saccharomyces cerevisiae: Then and now.</title>
        <authorList>
            <person name="Engel S.R."/>
            <person name="Dietrich F.S."/>
            <person name="Fisk D.G."/>
            <person name="Binkley G."/>
            <person name="Balakrishnan R."/>
            <person name="Costanzo M.C."/>
            <person name="Dwight S.S."/>
            <person name="Hitz B.C."/>
            <person name="Karra K."/>
            <person name="Nash R.S."/>
            <person name="Weng S."/>
            <person name="Wong E.D."/>
            <person name="Lloyd P."/>
            <person name="Skrzypek M.S."/>
            <person name="Miyasato S.R."/>
            <person name="Simison M."/>
            <person name="Cherry J.M."/>
        </authorList>
    </citation>
    <scope>GENOME REANNOTATION</scope>
    <source>
        <strain>ATCC 204508 / S288c</strain>
    </source>
</reference>
<reference key="5">
    <citation type="journal article" date="1985" name="Mol. Cell. Biol.">
        <title>General amino acid control and specific arginine repression in Saccharomyces cerevisiae: physical study of the bifunctional regulatory region of the ARG3 gene.</title>
        <authorList>
            <person name="Crabeel M."/>
            <person name="Huygen R."/>
            <person name="Verschueren K."/>
            <person name="Messenguy F."/>
            <person name="Tinel K."/>
            <person name="Cunin R."/>
            <person name="Glansdorff N."/>
        </authorList>
    </citation>
    <scope>NUCLEOTIDE SEQUENCE [GENOMIC DNA] OF 1-26</scope>
</reference>
<reference key="6">
    <citation type="journal article" date="2003" name="J. Biol. Chem.">
        <title>Yeast epiarginase regulation, an enzyme-enzyme activity control: identification of residues of ornithine carbamoyltransferase and arginase responsible for enzyme catalytic and regulatory activities.</title>
        <authorList>
            <person name="El Alami M."/>
            <person name="Dubois E."/>
            <person name="Oudjama Y."/>
            <person name="Tricot C."/>
            <person name="Wouters J."/>
            <person name="Stalon V."/>
            <person name="Messenguy F."/>
        </authorList>
    </citation>
    <scope>MUTAGENESIS OF THR-68; GLY-181; ASP-182; ASN-184; ASN-185; GLU-256; LYS-263; CYS-289 AND LEU-290</scope>
    <scope>INTERACTION WITH CAR1</scope>
    <scope>ACTIVITY REGULATION</scope>
</reference>
<reference key="7">
    <citation type="journal article" date="2003" name="Nature">
        <title>Global analysis of protein expression in yeast.</title>
        <authorList>
            <person name="Ghaemmaghami S."/>
            <person name="Huh W.-K."/>
            <person name="Bower K."/>
            <person name="Howson R.W."/>
            <person name="Belle A."/>
            <person name="Dephoure N."/>
            <person name="O'Shea E.K."/>
            <person name="Weissman J.S."/>
        </authorList>
    </citation>
    <scope>LEVEL OF PROTEIN EXPRESSION [LARGE SCALE ANALYSIS]</scope>
</reference>
<reference key="8">
    <citation type="journal article" date="2012" name="Proc. Natl. Acad. Sci. U.S.A.">
        <title>N-terminal acetylome analyses and functional insights of the N-terminal acetyltransferase NatB.</title>
        <authorList>
            <person name="Van Damme P."/>
            <person name="Lasa M."/>
            <person name="Polevoda B."/>
            <person name="Gazquez C."/>
            <person name="Elosegui-Artola A."/>
            <person name="Kim D.S."/>
            <person name="De Juan-Pardo E."/>
            <person name="Demeyer K."/>
            <person name="Hole K."/>
            <person name="Larrea E."/>
            <person name="Timmerman E."/>
            <person name="Prieto J."/>
            <person name="Arnesen T."/>
            <person name="Sherman F."/>
            <person name="Gevaert K."/>
            <person name="Aldabe R."/>
        </authorList>
    </citation>
    <scope>ACETYLATION [LARGE SCALE ANALYSIS] AT SER-2</scope>
    <scope>CLEAVAGE OF INITIATOR METHIONINE [LARGE SCALE ANALYSIS]</scope>
    <scope>IDENTIFICATION BY MASS SPECTROMETRY [LARGE SCALE ANALYSIS]</scope>
</reference>
<keyword id="KW-0007">Acetylation</keyword>
<keyword id="KW-0028">Amino-acid biosynthesis</keyword>
<keyword id="KW-0055">Arginine biosynthesis</keyword>
<keyword id="KW-0963">Cytoplasm</keyword>
<keyword id="KW-1185">Reference proteome</keyword>
<keyword id="KW-0808">Transferase</keyword>
<sequence>MSTTASTPSSLRHLISIKDLSDEEFRILVQRAQHFKNVFKANKTNDFQSNHLKLLGRTIALIFTKRSTRTRISTEGAATFFGAQPMFLGKEDIQLGVNESFYDTTKVVSSMVSCIFARVNKHEDILAFCKDSSVPIINSLCDKFHPLQAICDLLTIIENFNISLDEVNKGINSKLKMAWIGDANNVINDMCIACLKFGISVSISTPPGIEMDSDIVDEAKKVAERNGATFELTHDSLKASTNANILVTDTFVSMGEEFAKQAKLKQFKGFQINQELVSVADPNYKFMHCLPRHQEEVSDDVFYGEHSIVFEEAENRLYAAMSAIDIFVNNKGNFKDLK</sequence>
<comment type="catalytic activity">
    <reaction>
        <text>carbamoyl phosphate + L-ornithine = L-citrulline + phosphate + H(+)</text>
        <dbReference type="Rhea" id="RHEA:19513"/>
        <dbReference type="ChEBI" id="CHEBI:15378"/>
        <dbReference type="ChEBI" id="CHEBI:43474"/>
        <dbReference type="ChEBI" id="CHEBI:46911"/>
        <dbReference type="ChEBI" id="CHEBI:57743"/>
        <dbReference type="ChEBI" id="CHEBI:58228"/>
        <dbReference type="EC" id="2.1.3.3"/>
    </reaction>
</comment>
<comment type="activity regulation">
    <text evidence="2">Forms a stable complex with CAR1 in the presence of ornithine and arginine. In this complex CAR1 retains activity, but ARG3 activity is inhibited.</text>
</comment>
<comment type="pathway">
    <text>Amino-acid biosynthesis; L-arginine biosynthesis; L-arginine from L-ornithine and carbamoyl phosphate: step 1/3.</text>
</comment>
<comment type="subunit">
    <text evidence="2">Interacts with CAR1.</text>
</comment>
<comment type="interaction">
    <interactant intactId="EBI-12712">
        <id>P05150</id>
    </interactant>
    <interactant intactId="EBI-2856">
        <id>P00812</id>
        <label>CAR1</label>
    </interactant>
    <organismsDiffer>false</organismsDiffer>
    <experiments>4</experiments>
</comment>
<comment type="subcellular location">
    <subcellularLocation>
        <location>Cytoplasm</location>
    </subcellularLocation>
</comment>
<comment type="miscellaneous">
    <text evidence="3">Present with 1140 molecules/cell in log phase SD medium.</text>
</comment>
<comment type="similarity">
    <text evidence="4">Belongs to the aspartate/ornithine carbamoyltransferase superfamily. OTCase family.</text>
</comment>
<comment type="sequence caution" evidence="4">
    <conflict type="erroneous initiation">
        <sequence resource="EMBL-CDS" id="CAA58480"/>
    </conflict>
</comment>
<comment type="sequence caution" evidence="4">
    <conflict type="erroneous initiation">
        <sequence resource="EMBL-CDS" id="CAA89381"/>
    </conflict>
</comment>
<dbReference type="EC" id="2.1.3.3"/>
<dbReference type="EMBL" id="M11946">
    <property type="protein sequence ID" value="AAA34432.1"/>
    <property type="molecule type" value="Genomic_DNA"/>
</dbReference>
<dbReference type="EMBL" id="X83502">
    <property type="protein sequence ID" value="CAA58480.1"/>
    <property type="status" value="ALT_INIT"/>
    <property type="molecule type" value="Genomic_DNA"/>
</dbReference>
<dbReference type="EMBL" id="Z49363">
    <property type="protein sequence ID" value="CAA89381.1"/>
    <property type="status" value="ALT_INIT"/>
    <property type="molecule type" value="Genomic_DNA"/>
</dbReference>
<dbReference type="EMBL" id="M28301">
    <property type="protein sequence ID" value="AAA34433.1"/>
    <property type="molecule type" value="Genomic_DNA"/>
</dbReference>
<dbReference type="EMBL" id="BK006943">
    <property type="protein sequence ID" value="DAA08712.1"/>
    <property type="molecule type" value="Genomic_DNA"/>
</dbReference>
<dbReference type="PIR" id="S56020">
    <property type="entry name" value="OWBY"/>
</dbReference>
<dbReference type="RefSeq" id="NP_012447.1">
    <property type="nucleotide sequence ID" value="NM_001181521.1"/>
</dbReference>
<dbReference type="SMR" id="P05150"/>
<dbReference type="BioGRID" id="33669">
    <property type="interactions" value="30"/>
</dbReference>
<dbReference type="ComplexPortal" id="CPX-1707">
    <property type="entry name" value="Ornithine carbamoyltransferase arginase complex"/>
</dbReference>
<dbReference type="DIP" id="DIP-8093N"/>
<dbReference type="FunCoup" id="P05150">
    <property type="interactions" value="856"/>
</dbReference>
<dbReference type="IntAct" id="P05150">
    <property type="interactions" value="60"/>
</dbReference>
<dbReference type="MINT" id="P05150"/>
<dbReference type="STRING" id="4932.YJL088W"/>
<dbReference type="iPTMnet" id="P05150"/>
<dbReference type="PaxDb" id="4932-YJL088W"/>
<dbReference type="PeptideAtlas" id="P05150"/>
<dbReference type="EnsemblFungi" id="YJL088W_mRNA">
    <property type="protein sequence ID" value="YJL088W"/>
    <property type="gene ID" value="YJL088W"/>
</dbReference>
<dbReference type="GeneID" id="853357"/>
<dbReference type="KEGG" id="sce:YJL088W"/>
<dbReference type="AGR" id="SGD:S000003624"/>
<dbReference type="SGD" id="S000003624">
    <property type="gene designation" value="ARG3"/>
</dbReference>
<dbReference type="VEuPathDB" id="FungiDB:YJL088W"/>
<dbReference type="eggNOG" id="KOG1504">
    <property type="taxonomic scope" value="Eukaryota"/>
</dbReference>
<dbReference type="GeneTree" id="ENSGT00510000047417"/>
<dbReference type="HOGENOM" id="CLU_043846_3_0_1"/>
<dbReference type="InParanoid" id="P05150"/>
<dbReference type="OMA" id="DGNNVCN"/>
<dbReference type="OrthoDB" id="10252326at2759"/>
<dbReference type="BioCyc" id="MetaCyc:YJL088W-MONOMER"/>
<dbReference type="BioCyc" id="YEAST:YJL088W-MONOMER"/>
<dbReference type="Reactome" id="R-SCE-1268020">
    <property type="pathway name" value="Mitochondrial protein import"/>
</dbReference>
<dbReference type="Reactome" id="R-SCE-70635">
    <property type="pathway name" value="Urea cycle"/>
</dbReference>
<dbReference type="SABIO-RK" id="P05150"/>
<dbReference type="UniPathway" id="UPA00068">
    <property type="reaction ID" value="UER00112"/>
</dbReference>
<dbReference type="BioGRID-ORCS" id="853357">
    <property type="hits" value="5 hits in 10 CRISPR screens"/>
</dbReference>
<dbReference type="PRO" id="PR:P05150"/>
<dbReference type="Proteomes" id="UP000002311">
    <property type="component" value="Chromosome X"/>
</dbReference>
<dbReference type="RNAct" id="P05150">
    <property type="molecule type" value="protein"/>
</dbReference>
<dbReference type="GO" id="GO:0005829">
    <property type="term" value="C:cytosol"/>
    <property type="evidence" value="ECO:0000314"/>
    <property type="project" value="SGD"/>
</dbReference>
<dbReference type="GO" id="GO:0005739">
    <property type="term" value="C:mitochondrion"/>
    <property type="evidence" value="ECO:0000318"/>
    <property type="project" value="GO_Central"/>
</dbReference>
<dbReference type="GO" id="GO:1903269">
    <property type="term" value="C:ornithine carbamoyltransferase inhibitor complex"/>
    <property type="evidence" value="ECO:0000353"/>
    <property type="project" value="ComplexPortal"/>
</dbReference>
<dbReference type="GO" id="GO:0016597">
    <property type="term" value="F:amino acid binding"/>
    <property type="evidence" value="ECO:0007669"/>
    <property type="project" value="InterPro"/>
</dbReference>
<dbReference type="GO" id="GO:0004585">
    <property type="term" value="F:ornithine carbamoyltransferase activity"/>
    <property type="evidence" value="ECO:0000314"/>
    <property type="project" value="SGD"/>
</dbReference>
<dbReference type="GO" id="GO:0042450">
    <property type="term" value="P:arginine biosynthetic process via ornithine"/>
    <property type="evidence" value="ECO:0000318"/>
    <property type="project" value="GO_Central"/>
</dbReference>
<dbReference type="GO" id="GO:0019240">
    <property type="term" value="P:citrulline biosynthetic process"/>
    <property type="evidence" value="ECO:0000318"/>
    <property type="project" value="GO_Central"/>
</dbReference>
<dbReference type="GO" id="GO:0006526">
    <property type="term" value="P:L-arginine biosynthetic process"/>
    <property type="evidence" value="ECO:0000315"/>
    <property type="project" value="SGD"/>
</dbReference>
<dbReference type="FunFam" id="3.40.50.1370:FF:000017">
    <property type="entry name" value="Ornithine carbamoyltransferase"/>
    <property type="match status" value="1"/>
</dbReference>
<dbReference type="FunFam" id="3.40.50.1370:FF:000009">
    <property type="entry name" value="Ornithine carbamoyltransferase, mitochondrial"/>
    <property type="match status" value="1"/>
</dbReference>
<dbReference type="Gene3D" id="3.40.50.1370">
    <property type="entry name" value="Aspartate/ornithine carbamoyltransferase"/>
    <property type="match status" value="2"/>
</dbReference>
<dbReference type="InterPro" id="IPR006132">
    <property type="entry name" value="Asp/Orn_carbamoyltranf_P-bd"/>
</dbReference>
<dbReference type="InterPro" id="IPR006130">
    <property type="entry name" value="Asp/Orn_carbamoylTrfase"/>
</dbReference>
<dbReference type="InterPro" id="IPR036901">
    <property type="entry name" value="Asp/Orn_carbamoylTrfase_sf"/>
</dbReference>
<dbReference type="InterPro" id="IPR006131">
    <property type="entry name" value="Asp_carbamoyltransf_Asp/Orn-bd"/>
</dbReference>
<dbReference type="InterPro" id="IPR002292">
    <property type="entry name" value="Orn/put_carbamltrans"/>
</dbReference>
<dbReference type="NCBIfam" id="TIGR00658">
    <property type="entry name" value="orni_carb_tr"/>
    <property type="match status" value="1"/>
</dbReference>
<dbReference type="NCBIfam" id="NF001986">
    <property type="entry name" value="PRK00779.1"/>
    <property type="match status" value="1"/>
</dbReference>
<dbReference type="PANTHER" id="PTHR45753">
    <property type="entry name" value="ORNITHINE CARBAMOYLTRANSFERASE, MITOCHONDRIAL"/>
    <property type="match status" value="1"/>
</dbReference>
<dbReference type="PANTHER" id="PTHR45753:SF3">
    <property type="entry name" value="ORNITHINE TRANSCARBAMYLASE, MITOCHONDRIAL"/>
    <property type="match status" value="1"/>
</dbReference>
<dbReference type="Pfam" id="PF00185">
    <property type="entry name" value="OTCace"/>
    <property type="match status" value="1"/>
</dbReference>
<dbReference type="Pfam" id="PF02729">
    <property type="entry name" value="OTCace_N"/>
    <property type="match status" value="1"/>
</dbReference>
<dbReference type="PRINTS" id="PR00100">
    <property type="entry name" value="AOTCASE"/>
</dbReference>
<dbReference type="PRINTS" id="PR00102">
    <property type="entry name" value="OTCASE"/>
</dbReference>
<dbReference type="SUPFAM" id="SSF53671">
    <property type="entry name" value="Aspartate/ornithine carbamoyltransferase"/>
    <property type="match status" value="1"/>
</dbReference>
<dbReference type="PROSITE" id="PS00097">
    <property type="entry name" value="CARBAMOYLTRANSFERASE"/>
    <property type="match status" value="1"/>
</dbReference>
<accession>P05150</accession>
<accession>D6VW96</accession>
<name>OTC_YEAST</name>
<evidence type="ECO:0000250" key="1">
    <source>
        <dbReference type="UniProtKB" id="P00480"/>
    </source>
</evidence>
<evidence type="ECO:0000269" key="2">
    <source>
    </source>
</evidence>
<evidence type="ECO:0000269" key="3">
    <source>
    </source>
</evidence>
<evidence type="ECO:0000305" key="4"/>
<evidence type="ECO:0007744" key="5">
    <source>
    </source>
</evidence>
<feature type="initiator methionine" description="Removed" evidence="5">
    <location>
        <position position="1"/>
    </location>
</feature>
<feature type="chain" id="PRO_0000113082" description="Ornithine carbamoyltransferase">
    <location>
        <begin position="2"/>
        <end position="338"/>
    </location>
</feature>
<feature type="active site" description="Proton acceptor" evidence="1">
    <location>
        <position position="289"/>
    </location>
</feature>
<feature type="binding site" evidence="1">
    <location>
        <begin position="67"/>
        <end position="70"/>
    </location>
    <ligand>
        <name>carbamoyl phosphate</name>
        <dbReference type="ChEBI" id="CHEBI:58228"/>
    </ligand>
</feature>
<feature type="binding site" evidence="1">
    <location>
        <position position="118"/>
    </location>
    <ligand>
        <name>carbamoyl phosphate</name>
        <dbReference type="ChEBI" id="CHEBI:58228"/>
    </ligand>
</feature>
<feature type="binding site" evidence="1">
    <location>
        <position position="145"/>
    </location>
    <ligand>
        <name>carbamoyl phosphate</name>
        <dbReference type="ChEBI" id="CHEBI:58228"/>
    </ligand>
</feature>
<feature type="binding site" evidence="1">
    <location>
        <position position="148"/>
    </location>
    <ligand>
        <name>carbamoyl phosphate</name>
        <dbReference type="ChEBI" id="CHEBI:58228"/>
    </ligand>
</feature>
<feature type="binding site" evidence="1">
    <location>
        <position position="185"/>
    </location>
    <ligand>
        <name>L-ornithine</name>
        <dbReference type="ChEBI" id="CHEBI:46911"/>
    </ligand>
</feature>
<feature type="binding site" evidence="1">
    <location>
        <position position="249"/>
    </location>
    <ligand>
        <name>L-ornithine</name>
        <dbReference type="ChEBI" id="CHEBI:46911"/>
    </ligand>
</feature>
<feature type="binding site" evidence="1">
    <location>
        <position position="253"/>
    </location>
    <ligand>
        <name>L-ornithine</name>
        <dbReference type="ChEBI" id="CHEBI:46911"/>
    </ligand>
</feature>
<feature type="binding site" evidence="1">
    <location>
        <position position="254"/>
    </location>
    <ligand>
        <name>L-ornithine</name>
        <dbReference type="ChEBI" id="CHEBI:46911"/>
    </ligand>
</feature>
<feature type="binding site" evidence="1">
    <location>
        <begin position="289"/>
        <end position="290"/>
    </location>
    <ligand>
        <name>carbamoyl phosphate</name>
        <dbReference type="ChEBI" id="CHEBI:58228"/>
    </ligand>
</feature>
<feature type="binding site" evidence="1">
    <location>
        <position position="316"/>
    </location>
    <ligand>
        <name>carbamoyl phosphate</name>
        <dbReference type="ChEBI" id="CHEBI:58228"/>
    </ligand>
</feature>
<feature type="modified residue" description="N-acetylserine" evidence="5">
    <location>
        <position position="2"/>
    </location>
</feature>
<feature type="mutagenesis site" description="Reduces activity by 95%. Reduces affinity for ornithine 2-fold." evidence="2">
    <original>T</original>
    <variation>G</variation>
    <location>
        <position position="68"/>
    </location>
</feature>
<feature type="mutagenesis site" description="Loss of activity." evidence="2">
    <original>G</original>
    <variation>R</variation>
    <location>
        <position position="181"/>
    </location>
</feature>
<feature type="mutagenesis site" description="Reduces activity by 33%. Reduces affinity for ornithine 30-fold." evidence="2">
    <original>D</original>
    <variation>N</variation>
    <location>
        <position position="182"/>
    </location>
</feature>
<feature type="mutagenesis site" description="Reduces activity by 50%. Reduces affinity for ornithine 20-fold." evidence="2">
    <original>N</original>
    <variation>Q</variation>
    <location>
        <position position="184"/>
    </location>
</feature>
<feature type="mutagenesis site" description="No effect on activity. Reduces affinity for ornithine 200-fold." evidence="2">
    <original>N</original>
    <variation>Q</variation>
    <location>
        <position position="185"/>
    </location>
</feature>
<feature type="mutagenesis site" description="Reduces activity by 50%." evidence="2">
    <original>E</original>
    <variation>Q</variation>
    <location>
        <position position="256"/>
    </location>
</feature>
<feature type="mutagenesis site" description="Reduces activity by 70%. Reduces affinity for ornithine 18-fold." evidence="2">
    <original>K</original>
    <variation>A</variation>
    <location>
        <position position="263"/>
    </location>
</feature>
<feature type="mutagenesis site" description="Reduces activity by 90%. Reduces affinity for ornithine 6-fold." evidence="2">
    <original>C</original>
    <variation>S</variation>
    <location>
        <position position="289"/>
    </location>
</feature>
<feature type="mutagenesis site" description="Reduces activity by 86%." evidence="2">
    <original>L</original>
    <variation>S</variation>
    <location>
        <position position="290"/>
    </location>
</feature>
<protein>
    <recommendedName>
        <fullName>Ornithine carbamoyltransferase</fullName>
        <ecNumber>2.1.3.3</ecNumber>
    </recommendedName>
    <alternativeName>
        <fullName>Ornithine transcarbamylase</fullName>
        <shortName>OTCase</shortName>
    </alternativeName>
</protein>
<proteinExistence type="evidence at protein level"/>
<gene>
    <name type="primary">ARG3</name>
    <name type="ordered locus">YJL088W</name>
    <name type="ORF">J0924</name>
</gene>